<dbReference type="PDB" id="1FMM">
    <property type="method" value="NMR"/>
    <property type="chains" value="S=1-132"/>
</dbReference>
<dbReference type="PDBsum" id="1FMM"/>
<dbReference type="BMRB" id="Q7SIF8"/>
<dbReference type="SMR" id="Q7SIF8"/>
<dbReference type="EvolutionaryTrace" id="Q7SIF8"/>
<dbReference type="GO" id="GO:0005938">
    <property type="term" value="C:cell cortex"/>
    <property type="evidence" value="ECO:0007669"/>
    <property type="project" value="UniProtKB-SubCell"/>
</dbReference>
<dbReference type="GO" id="GO:0005829">
    <property type="term" value="C:cytosol"/>
    <property type="evidence" value="ECO:0000250"/>
    <property type="project" value="UniProtKB"/>
</dbReference>
<dbReference type="GO" id="GO:0005576">
    <property type="term" value="C:extracellular region"/>
    <property type="evidence" value="ECO:0000250"/>
    <property type="project" value="UniProtKB"/>
</dbReference>
<dbReference type="GO" id="GO:0005615">
    <property type="term" value="C:extracellular space"/>
    <property type="evidence" value="ECO:0000250"/>
    <property type="project" value="UniProtKB"/>
</dbReference>
<dbReference type="GO" id="GO:0005634">
    <property type="term" value="C:nucleus"/>
    <property type="evidence" value="ECO:0007669"/>
    <property type="project" value="UniProtKB-SubCell"/>
</dbReference>
<dbReference type="GO" id="GO:0005104">
    <property type="term" value="F:fibroblast growth factor receptor binding"/>
    <property type="evidence" value="ECO:0000250"/>
    <property type="project" value="UniProtKB"/>
</dbReference>
<dbReference type="GO" id="GO:0008083">
    <property type="term" value="F:growth factor activity"/>
    <property type="evidence" value="ECO:0000250"/>
    <property type="project" value="UniProtKB"/>
</dbReference>
<dbReference type="GO" id="GO:0008201">
    <property type="term" value="F:heparin binding"/>
    <property type="evidence" value="ECO:0000250"/>
    <property type="project" value="UniProtKB"/>
</dbReference>
<dbReference type="GO" id="GO:0005178">
    <property type="term" value="F:integrin binding"/>
    <property type="evidence" value="ECO:0000250"/>
    <property type="project" value="UniProtKB"/>
</dbReference>
<dbReference type="GO" id="GO:0044548">
    <property type="term" value="F:S100 protein binding"/>
    <property type="evidence" value="ECO:0000250"/>
    <property type="project" value="UniProtKB"/>
</dbReference>
<dbReference type="GO" id="GO:0001525">
    <property type="term" value="P:angiogenesis"/>
    <property type="evidence" value="ECO:0007669"/>
    <property type="project" value="UniProtKB-KW"/>
</dbReference>
<dbReference type="GO" id="GO:0060681">
    <property type="term" value="P:branch elongation involved in ureteric bud branching"/>
    <property type="evidence" value="ECO:0000250"/>
    <property type="project" value="UniProtKB"/>
</dbReference>
<dbReference type="GO" id="GO:0030154">
    <property type="term" value="P:cell differentiation"/>
    <property type="evidence" value="ECO:0007669"/>
    <property type="project" value="UniProtKB-KW"/>
</dbReference>
<dbReference type="GO" id="GO:0008543">
    <property type="term" value="P:fibroblast growth factor receptor signaling pathway"/>
    <property type="evidence" value="ECO:0000250"/>
    <property type="project" value="UniProtKB"/>
</dbReference>
<dbReference type="GO" id="GO:0072163">
    <property type="term" value="P:mesonephric epithelium development"/>
    <property type="evidence" value="ECO:0000250"/>
    <property type="project" value="UniProtKB"/>
</dbReference>
<dbReference type="GO" id="GO:0045766">
    <property type="term" value="P:positive regulation of angiogenesis"/>
    <property type="evidence" value="ECO:0000250"/>
    <property type="project" value="UniProtKB"/>
</dbReference>
<dbReference type="GO" id="GO:0051781">
    <property type="term" value="P:positive regulation of cell division"/>
    <property type="evidence" value="ECO:0000250"/>
    <property type="project" value="UniProtKB"/>
</dbReference>
<dbReference type="GO" id="GO:0030335">
    <property type="term" value="P:positive regulation of cell migration"/>
    <property type="evidence" value="ECO:0000250"/>
    <property type="project" value="UniProtKB"/>
</dbReference>
<dbReference type="GO" id="GO:0008284">
    <property type="term" value="P:positive regulation of cell population proliferation"/>
    <property type="evidence" value="ECO:0000250"/>
    <property type="project" value="UniProtKB"/>
</dbReference>
<dbReference type="GO" id="GO:0045542">
    <property type="term" value="P:positive regulation of cholesterol biosynthetic process"/>
    <property type="evidence" value="ECO:0000250"/>
    <property type="project" value="UniProtKB"/>
</dbReference>
<dbReference type="GO" id="GO:1902533">
    <property type="term" value="P:positive regulation of intracellular signal transduction"/>
    <property type="evidence" value="ECO:0000250"/>
    <property type="project" value="UniProtKB"/>
</dbReference>
<dbReference type="GO" id="GO:0045944">
    <property type="term" value="P:positive regulation of transcription by RNA polymerase II"/>
    <property type="evidence" value="ECO:0000250"/>
    <property type="project" value="UniProtKB"/>
</dbReference>
<dbReference type="CDD" id="cd23313">
    <property type="entry name" value="beta-trefoil_FGF1"/>
    <property type="match status" value="1"/>
</dbReference>
<dbReference type="FunFam" id="2.80.10.50:FF:000020">
    <property type="entry name" value="Fibroblast growth factor 1"/>
    <property type="match status" value="1"/>
</dbReference>
<dbReference type="Gene3D" id="2.80.10.50">
    <property type="match status" value="1"/>
</dbReference>
<dbReference type="InterPro" id="IPR002209">
    <property type="entry name" value="Fibroblast_GF_fam"/>
</dbReference>
<dbReference type="InterPro" id="IPR008996">
    <property type="entry name" value="IL1/FGF"/>
</dbReference>
<dbReference type="PANTHER" id="PTHR11486">
    <property type="entry name" value="FIBROBLAST GROWTH FACTOR"/>
    <property type="match status" value="1"/>
</dbReference>
<dbReference type="Pfam" id="PF00167">
    <property type="entry name" value="FGF"/>
    <property type="match status" value="1"/>
</dbReference>
<dbReference type="PRINTS" id="PR00263">
    <property type="entry name" value="HBGFFGF"/>
</dbReference>
<dbReference type="PRINTS" id="PR00262">
    <property type="entry name" value="IL1HBGF"/>
</dbReference>
<dbReference type="SMART" id="SM00442">
    <property type="entry name" value="FGF"/>
    <property type="match status" value="1"/>
</dbReference>
<dbReference type="SUPFAM" id="SSF50353">
    <property type="entry name" value="Cytokine"/>
    <property type="match status" value="1"/>
</dbReference>
<dbReference type="PROSITE" id="PS00247">
    <property type="entry name" value="HBGF_FGF"/>
    <property type="match status" value="1"/>
</dbReference>
<keyword id="KW-0002">3D-structure</keyword>
<keyword id="KW-0037">Angiogenesis</keyword>
<keyword id="KW-0963">Cytoplasm</keyword>
<keyword id="KW-0217">Developmental protein</keyword>
<keyword id="KW-0221">Differentiation</keyword>
<keyword id="KW-0339">Growth factor</keyword>
<keyword id="KW-0358">Heparin-binding</keyword>
<keyword id="KW-0497">Mitogen</keyword>
<keyword id="KW-0539">Nucleus</keyword>
<keyword id="KW-0964">Secreted</keyword>
<gene>
    <name type="primary">fgf1</name>
    <name type="synonym">fgf-1</name>
</gene>
<protein>
    <recommendedName>
        <fullName>Fibroblast growth factor 1</fullName>
        <shortName>FGF-1</shortName>
    </recommendedName>
    <alternativeName>
        <fullName>Acidic fibroblast growth factor</fullName>
        <shortName>aFGF</shortName>
    </alternativeName>
    <alternativeName>
        <fullName>Heparin-binding growth factor 1</fullName>
        <shortName>HBGF-1</shortName>
    </alternativeName>
</protein>
<reference key="1">
    <citation type="journal article" date="2002" name="J. Biol. Chem.">
        <title>Structure and stability of an acidic fibroblast growth factor from Notophthalmus viridescens.</title>
        <authorList>
            <person name="Arunkumar A.I."/>
            <person name="Srisailam S."/>
            <person name="Kumar T.K."/>
            <person name="Kathir K.M."/>
            <person name="Chi Y.H."/>
            <person name="Wang H.M."/>
            <person name="Chang G.G."/>
            <person name="Chiu I."/>
            <person name="Yu C."/>
        </authorList>
    </citation>
    <scope>STRUCTURE BY NMR IN COMPLEX WITH SUBSTRATE ANALOG</scope>
</reference>
<evidence type="ECO:0000250" key="1"/>
<evidence type="ECO:0000250" key="2">
    <source>
        <dbReference type="UniProtKB" id="P05230"/>
    </source>
</evidence>
<evidence type="ECO:0000305" key="3"/>
<evidence type="ECO:0007829" key="4">
    <source>
        <dbReference type="PDB" id="1FMM"/>
    </source>
</evidence>
<organism>
    <name type="scientific">Notophthalmus viridescens</name>
    <name type="common">Eastern newt</name>
    <name type="synonym">Triturus viridescens</name>
    <dbReference type="NCBI Taxonomy" id="8316"/>
    <lineage>
        <taxon>Eukaryota</taxon>
        <taxon>Metazoa</taxon>
        <taxon>Chordata</taxon>
        <taxon>Craniata</taxon>
        <taxon>Vertebrata</taxon>
        <taxon>Euteleostomi</taxon>
        <taxon>Amphibia</taxon>
        <taxon>Batrachia</taxon>
        <taxon>Caudata</taxon>
        <taxon>Salamandroidea</taxon>
        <taxon>Salamandridae</taxon>
        <taxon>Pleurodelinae</taxon>
        <taxon>Notophthalmus</taxon>
    </lineage>
</organism>
<name>FGF1_NOTVI</name>
<sequence length="132" mass="15015">QKPKLLYCSNGGYFLRIFPDGKVDGTRDRSDPYIQLQFYAESVGEVYIKSLETGQYLAMDSDGQLYASQSPSEECLFLERLEENNYNTYKSKVHADKDWFVGIKKNGKTKPGSRTHFGQKAILFLPLPVSSD</sequence>
<proteinExistence type="evidence at protein level"/>
<comment type="function">
    <text evidence="2">Plays an important role in the regulation of cell survival, cell division, angiogenesis, cell differentiation and cell migration. Functions as a potent mitogen in vitro. Acts as a ligand for FGFR1 and integrins. Binds to FGFR1 in the presence of heparin leading to FGFR1 dimerization and activation via sequential autophosphorylation on tyrosine residues which act as docking sites for interacting proteins, leading to the activation of several signaling cascades. Binds to integrins. Its binding to integrins and subsequent ternary complex formation with integrins and FGFR1 are essential for FGF1 signaling.</text>
</comment>
<comment type="subcellular location">
    <subcellularLocation>
        <location evidence="1">Secreted</location>
    </subcellularLocation>
    <subcellularLocation>
        <location evidence="1">Cytoplasm</location>
    </subcellularLocation>
    <subcellularLocation>
        <location evidence="1">Cytoplasm</location>
        <location evidence="1">Cell cortex</location>
    </subcellularLocation>
    <subcellularLocation>
        <location evidence="1">Cytoplasm</location>
        <location evidence="1">Cytosol</location>
    </subcellularLocation>
    <subcellularLocation>
        <location evidence="1">Nucleus</location>
    </subcellularLocation>
    <text evidence="1">Lacks a cleavable signal sequence. Within the cytoplasm, it is transported to the cell membrane and then secreted by a non-classical pathway that requires Cu(2+) ions and S100A13 (By similarity). Binding of exogenous FGF1 to FGFR facilitates endocytosis followed by translocation of FGF1 across endosomal membrane into the cytosol. Nuclear import from the cytosol requires the classical nuclear import machinery (By similarity).</text>
</comment>
<comment type="similarity">
    <text evidence="3">Belongs to the heparin-binding growth factors family.</text>
</comment>
<feature type="chain" id="PRO_0000147599" description="Fibroblast growth factor 1">
    <location>
        <begin position="1" status="less than"/>
        <end position="132"/>
    </location>
</feature>
<feature type="binding site">
    <location>
        <position position="10"/>
    </location>
    <ligand>
        <name>heparin</name>
        <dbReference type="ChEBI" id="CHEBI:28304"/>
    </ligand>
</feature>
<feature type="binding site">
    <location>
        <begin position="108"/>
        <end position="120"/>
    </location>
    <ligand>
        <name>heparin</name>
        <dbReference type="ChEBI" id="CHEBI:28304"/>
    </ligand>
</feature>
<feature type="non-terminal residue">
    <location>
        <position position="1"/>
    </location>
</feature>
<feature type="strand" evidence="4">
    <location>
        <begin position="6"/>
        <end position="8"/>
    </location>
</feature>
<feature type="turn" evidence="4">
    <location>
        <begin position="9"/>
        <end position="11"/>
    </location>
</feature>
<feature type="strand" evidence="4">
    <location>
        <begin position="14"/>
        <end position="17"/>
    </location>
</feature>
<feature type="strand" evidence="4">
    <location>
        <begin position="19"/>
        <end position="21"/>
    </location>
</feature>
<feature type="strand" evidence="4">
    <location>
        <begin position="23"/>
        <end position="27"/>
    </location>
</feature>
<feature type="strand" evidence="4">
    <location>
        <begin position="36"/>
        <end position="40"/>
    </location>
</feature>
<feature type="strand" evidence="4">
    <location>
        <begin position="42"/>
        <end position="44"/>
    </location>
</feature>
<feature type="strand" evidence="4">
    <location>
        <begin position="46"/>
        <end position="50"/>
    </location>
</feature>
<feature type="turn" evidence="4">
    <location>
        <begin position="51"/>
        <end position="54"/>
    </location>
</feature>
<feature type="helix" evidence="4">
    <location>
        <begin position="73"/>
        <end position="75"/>
    </location>
</feature>
<feature type="strand" evidence="4">
    <location>
        <begin position="81"/>
        <end position="85"/>
    </location>
</feature>
<feature type="turn" evidence="4">
    <location>
        <begin position="120"/>
        <end position="122"/>
    </location>
</feature>
<feature type="strand" evidence="4">
    <location>
        <begin position="124"/>
        <end position="126"/>
    </location>
</feature>
<accession>Q7SIF8</accession>